<evidence type="ECO:0000255" key="1">
    <source>
        <dbReference type="HAMAP-Rule" id="MF_01334"/>
    </source>
</evidence>
<evidence type="ECO:0000256" key="2">
    <source>
        <dbReference type="SAM" id="MobiDB-lite"/>
    </source>
</evidence>
<evidence type="ECO:0000305" key="3"/>
<proteinExistence type="inferred from homology"/>
<feature type="chain" id="PRO_1000052866" description="Large ribosomal subunit protein bL25">
    <location>
        <begin position="1"/>
        <end position="202"/>
    </location>
</feature>
<feature type="region of interest" description="Disordered" evidence="2">
    <location>
        <begin position="180"/>
        <end position="202"/>
    </location>
</feature>
<feature type="compositionally biased region" description="Acidic residues" evidence="2">
    <location>
        <begin position="185"/>
        <end position="202"/>
    </location>
</feature>
<protein>
    <recommendedName>
        <fullName evidence="1">Large ribosomal subunit protein bL25</fullName>
    </recommendedName>
    <alternativeName>
        <fullName evidence="3">50S ribosomal protein L25</fullName>
    </alternativeName>
    <alternativeName>
        <fullName evidence="1">General stress protein CTC</fullName>
    </alternativeName>
</protein>
<accession>A7Z0H5</accession>
<gene>
    <name evidence="1" type="primary">rplY</name>
    <name evidence="1" type="synonym">ctc</name>
    <name type="ordered locus">RBAM_000610</name>
</gene>
<organism>
    <name type="scientific">Bacillus velezensis (strain DSM 23117 / BGSC 10A6 / LMG 26770 / FZB42)</name>
    <name type="common">Bacillus amyloliquefaciens subsp. plantarum</name>
    <dbReference type="NCBI Taxonomy" id="326423"/>
    <lineage>
        <taxon>Bacteria</taxon>
        <taxon>Bacillati</taxon>
        <taxon>Bacillota</taxon>
        <taxon>Bacilli</taxon>
        <taxon>Bacillales</taxon>
        <taxon>Bacillaceae</taxon>
        <taxon>Bacillus</taxon>
        <taxon>Bacillus amyloliquefaciens group</taxon>
    </lineage>
</organism>
<reference key="1">
    <citation type="journal article" date="2007" name="Nat. Biotechnol.">
        <title>Comparative analysis of the complete genome sequence of the plant growth-promoting bacterium Bacillus amyloliquefaciens FZB42.</title>
        <authorList>
            <person name="Chen X.H."/>
            <person name="Koumoutsi A."/>
            <person name="Scholz R."/>
            <person name="Eisenreich A."/>
            <person name="Schneider K."/>
            <person name="Heinemeyer I."/>
            <person name="Morgenstern B."/>
            <person name="Voss B."/>
            <person name="Hess W.R."/>
            <person name="Reva O."/>
            <person name="Junge H."/>
            <person name="Voigt B."/>
            <person name="Jungblut P.R."/>
            <person name="Vater J."/>
            <person name="Suessmuth R."/>
            <person name="Liesegang H."/>
            <person name="Strittmatter A."/>
            <person name="Gottschalk G."/>
            <person name="Borriss R."/>
        </authorList>
    </citation>
    <scope>NUCLEOTIDE SEQUENCE [LARGE SCALE GENOMIC DNA]</scope>
    <source>
        <strain>DSM 23117 / BGSC 10A6 / LMG 26770 / FZB42</strain>
    </source>
</reference>
<sequence>MATLKANERTDFKRSTLRKIRHSGHVPGIIYGKEITNTPVSLDSVELLKTLRDEGKNTIITIDVNGNQQSVMVTDLQTDPLKNELTHADFQVVNMSEELEAEVPIQLTGEAKGVKDGGVIQQPLHELSIKAKPKDIPQTINVDISGLEMNDVLTIADLTADGNYTFTNDPEEVVASILPPKQEAFEEDAEPSPGEEPEGENQ</sequence>
<name>RL25_BACVZ</name>
<comment type="function">
    <text evidence="1">This is one of the proteins that binds to the 5S RNA in the ribosome where it forms part of the central protuberance.</text>
</comment>
<comment type="subunit">
    <text evidence="1">Part of the 50S ribosomal subunit; part of the 5S rRNA/L5/L18/L25 subcomplex. Contacts the 5S rRNA. Binds to the 5S rRNA independently of L5 and L18.</text>
</comment>
<comment type="similarity">
    <text evidence="1">Belongs to the bacterial ribosomal protein bL25 family. CTC subfamily.</text>
</comment>
<dbReference type="EMBL" id="CP000560">
    <property type="protein sequence ID" value="ABS72501.1"/>
    <property type="molecule type" value="Genomic_DNA"/>
</dbReference>
<dbReference type="RefSeq" id="WP_011996173.1">
    <property type="nucleotide sequence ID" value="NC_009725.2"/>
</dbReference>
<dbReference type="SMR" id="A7Z0H5"/>
<dbReference type="GeneID" id="93079199"/>
<dbReference type="KEGG" id="bay:RBAM_000610"/>
<dbReference type="HOGENOM" id="CLU_075939_2_0_9"/>
<dbReference type="Proteomes" id="UP000001120">
    <property type="component" value="Chromosome"/>
</dbReference>
<dbReference type="GO" id="GO:0022625">
    <property type="term" value="C:cytosolic large ribosomal subunit"/>
    <property type="evidence" value="ECO:0007669"/>
    <property type="project" value="TreeGrafter"/>
</dbReference>
<dbReference type="GO" id="GO:0008097">
    <property type="term" value="F:5S rRNA binding"/>
    <property type="evidence" value="ECO:0007669"/>
    <property type="project" value="InterPro"/>
</dbReference>
<dbReference type="GO" id="GO:0003735">
    <property type="term" value="F:structural constituent of ribosome"/>
    <property type="evidence" value="ECO:0007669"/>
    <property type="project" value="InterPro"/>
</dbReference>
<dbReference type="GO" id="GO:0006412">
    <property type="term" value="P:translation"/>
    <property type="evidence" value="ECO:0007669"/>
    <property type="project" value="UniProtKB-UniRule"/>
</dbReference>
<dbReference type="CDD" id="cd00495">
    <property type="entry name" value="Ribosomal_L25_TL5_CTC"/>
    <property type="match status" value="1"/>
</dbReference>
<dbReference type="Gene3D" id="2.170.120.20">
    <property type="entry name" value="Ribosomal protein L25, beta domain"/>
    <property type="match status" value="1"/>
</dbReference>
<dbReference type="Gene3D" id="2.40.240.10">
    <property type="entry name" value="Ribosomal Protein L25, Chain P"/>
    <property type="match status" value="1"/>
</dbReference>
<dbReference type="HAMAP" id="MF_01334">
    <property type="entry name" value="Ribosomal_bL25_CTC"/>
    <property type="match status" value="1"/>
</dbReference>
<dbReference type="InterPro" id="IPR020056">
    <property type="entry name" value="Rbsml_bL25/Gln-tRNA_synth_N"/>
</dbReference>
<dbReference type="InterPro" id="IPR011035">
    <property type="entry name" value="Ribosomal_bL25/Gln-tRNA_synth"/>
</dbReference>
<dbReference type="InterPro" id="IPR020057">
    <property type="entry name" value="Ribosomal_bL25_b-dom"/>
</dbReference>
<dbReference type="InterPro" id="IPR037121">
    <property type="entry name" value="Ribosomal_bL25_C"/>
</dbReference>
<dbReference type="InterPro" id="IPR001021">
    <property type="entry name" value="Ribosomal_bL25_long"/>
</dbReference>
<dbReference type="InterPro" id="IPR029751">
    <property type="entry name" value="Ribosomal_L25_dom"/>
</dbReference>
<dbReference type="InterPro" id="IPR020930">
    <property type="entry name" value="Ribosomal_uL5_bac-type"/>
</dbReference>
<dbReference type="NCBIfam" id="TIGR00731">
    <property type="entry name" value="bL25_bact_ctc"/>
    <property type="match status" value="1"/>
</dbReference>
<dbReference type="NCBIfam" id="NF004133">
    <property type="entry name" value="PRK05618.2-4"/>
    <property type="match status" value="1"/>
</dbReference>
<dbReference type="PANTHER" id="PTHR33284">
    <property type="entry name" value="RIBOSOMAL PROTEIN L25/GLN-TRNA SYNTHETASE, ANTI-CODON-BINDING DOMAIN-CONTAINING PROTEIN"/>
    <property type="match status" value="1"/>
</dbReference>
<dbReference type="PANTHER" id="PTHR33284:SF1">
    <property type="entry name" value="RIBOSOMAL PROTEIN L25_GLN-TRNA SYNTHETASE, ANTI-CODON-BINDING DOMAIN-CONTAINING PROTEIN"/>
    <property type="match status" value="1"/>
</dbReference>
<dbReference type="Pfam" id="PF01386">
    <property type="entry name" value="Ribosomal_L25p"/>
    <property type="match status" value="1"/>
</dbReference>
<dbReference type="Pfam" id="PF14693">
    <property type="entry name" value="Ribosomal_TL5_C"/>
    <property type="match status" value="1"/>
</dbReference>
<dbReference type="SUPFAM" id="SSF50715">
    <property type="entry name" value="Ribosomal protein L25-like"/>
    <property type="match status" value="1"/>
</dbReference>
<keyword id="KW-0687">Ribonucleoprotein</keyword>
<keyword id="KW-0689">Ribosomal protein</keyword>
<keyword id="KW-0694">RNA-binding</keyword>
<keyword id="KW-0699">rRNA-binding</keyword>